<reference key="1">
    <citation type="journal article" date="1993" name="FEBS Lett.">
        <title>Genes of variola and vaccinia viruses necessary to overcome the host protective mechanisms.</title>
        <authorList>
            <person name="Shchelkunov S.N."/>
            <person name="Blinov V.M."/>
            <person name="Sandakhchiev L.S."/>
        </authorList>
    </citation>
    <scope>NUCLEOTIDE SEQUENCE [GENOMIC DNA]</scope>
    <source>
        <strain>India-1967 / Isolate Ind3</strain>
    </source>
</reference>
<proteinExistence type="evidence at transcript level"/>
<evidence type="ECO:0000250" key="1">
    <source>
        <dbReference type="UniProtKB" id="P16913"/>
    </source>
</evidence>
<evidence type="ECO:0000255" key="2">
    <source>
        <dbReference type="PROSITE-ProRule" id="PRU00159"/>
    </source>
</evidence>
<organismHost>
    <name type="scientific">Homo sapiens</name>
    <name type="common">Human</name>
    <dbReference type="NCBI Taxonomy" id="9606"/>
</organismHost>
<organism>
    <name type="scientific">Variola virus (isolate Human/India/Ind3/1967)</name>
    <name type="common">VARV</name>
    <name type="synonym">Smallpox virus</name>
    <dbReference type="NCBI Taxonomy" id="587200"/>
    <lineage>
        <taxon>Viruses</taxon>
        <taxon>Varidnaviria</taxon>
        <taxon>Bamfordvirae</taxon>
        <taxon>Nucleocytoviricota</taxon>
        <taxon>Pokkesviricetes</taxon>
        <taxon>Chitovirales</taxon>
        <taxon>Poxviridae</taxon>
        <taxon>Chordopoxvirinae</taxon>
        <taxon>Orthopoxvirus</taxon>
        <taxon>Variola virus</taxon>
    </lineage>
</organism>
<accession>P33800</accession>
<protein>
    <recommendedName>
        <fullName>B1 kinase</fullName>
    </recommendedName>
    <alternativeName>
        <fullName>Serine/threonine-protein kinase 1</fullName>
        <ecNumber>2.7.11.1</ecNumber>
    </alternativeName>
    <alternativeName>
        <fullName>Vaccinia protein kinase 1</fullName>
    </alternativeName>
</protein>
<feature type="chain" id="PRO_0000086793" description="B1 kinase">
    <location>
        <begin position="1"/>
        <end position="300"/>
    </location>
</feature>
<feature type="domain" description="Protein kinase" evidence="2">
    <location>
        <begin position="16"/>
        <end position="282"/>
    </location>
</feature>
<feature type="active site" description="Proton acceptor" evidence="2">
    <location>
        <position position="147"/>
    </location>
</feature>
<feature type="binding site" evidence="2">
    <location>
        <begin position="22"/>
        <end position="30"/>
    </location>
    <ligand>
        <name>ATP</name>
        <dbReference type="ChEBI" id="CHEBI:30616"/>
    </ligand>
</feature>
<feature type="binding site" evidence="2">
    <location>
        <position position="45"/>
    </location>
    <ligand>
        <name>ATP</name>
        <dbReference type="ChEBI" id="CHEBI:30616"/>
    </ligand>
</feature>
<keyword id="KW-0067">ATP-binding</keyword>
<keyword id="KW-0244">Early protein</keyword>
<keyword id="KW-1035">Host cytoplasm</keyword>
<keyword id="KW-0945">Host-virus interaction</keyword>
<keyword id="KW-0418">Kinase</keyword>
<keyword id="KW-0460">Magnesium</keyword>
<keyword id="KW-0547">Nucleotide-binding</keyword>
<keyword id="KW-0597">Phosphoprotein</keyword>
<keyword id="KW-1185">Reference proteome</keyword>
<keyword id="KW-0723">Serine/threonine-protein kinase</keyword>
<keyword id="KW-0808">Transferase</keyword>
<keyword id="KW-1188">Viral release from host cell</keyword>
<keyword id="KW-0946">Virion</keyword>
<sequence>MNFQGLVLTDNCKNQWVVGPLIGKGGFGSIYTTNDNNYVVKIEPKANGSLFTEQAFYTRVLKPSVIEEWKKSHHISHVGVITCKAFGLYKSINTEYRFLVINRLGVDLDAVIRANNNRLPKRSVMLVGIEILNTIQFMHEQGYSHGNIKASNIVLDQMDKNKLYLVDYGLVSKFMSNGEHVPFIRNPNKMDNGTLEFTPIDSHKGYVVSRRGDLETLGYCMIRWLGGILPWTKIAETKNCALVSATKQKYVNNTTTLLMTSLQYAPRELLQYITMVNSLTYFEEPNYDKFRHILMQGAYY</sequence>
<dbReference type="EC" id="2.7.11.1"/>
<dbReference type="EMBL" id="X69198">
    <property type="protein sequence ID" value="CAA49110.1"/>
    <property type="molecule type" value="Genomic_DNA"/>
</dbReference>
<dbReference type="PIR" id="A36855">
    <property type="entry name" value="A36855"/>
</dbReference>
<dbReference type="RefSeq" id="NP_042213.1">
    <property type="nucleotide sequence ID" value="NC_001611.1"/>
</dbReference>
<dbReference type="SMR" id="P33800"/>
<dbReference type="GeneID" id="1486550"/>
<dbReference type="KEGG" id="vg:1486550"/>
<dbReference type="BRENDA" id="2.7.11.1">
    <property type="organism ID" value="6603"/>
</dbReference>
<dbReference type="Proteomes" id="UP000002060">
    <property type="component" value="Segment"/>
</dbReference>
<dbReference type="GO" id="GO:0030430">
    <property type="term" value="C:host cell cytoplasm"/>
    <property type="evidence" value="ECO:0007669"/>
    <property type="project" value="UniProtKB-SubCell"/>
</dbReference>
<dbReference type="GO" id="GO:0044423">
    <property type="term" value="C:virion component"/>
    <property type="evidence" value="ECO:0007669"/>
    <property type="project" value="UniProtKB-KW"/>
</dbReference>
<dbReference type="GO" id="GO:0005524">
    <property type="term" value="F:ATP binding"/>
    <property type="evidence" value="ECO:0007669"/>
    <property type="project" value="UniProtKB-KW"/>
</dbReference>
<dbReference type="GO" id="GO:0106310">
    <property type="term" value="F:protein serine kinase activity"/>
    <property type="evidence" value="ECO:0007669"/>
    <property type="project" value="RHEA"/>
</dbReference>
<dbReference type="GO" id="GO:0004674">
    <property type="term" value="F:protein serine/threonine kinase activity"/>
    <property type="evidence" value="ECO:0007669"/>
    <property type="project" value="UniProtKB-KW"/>
</dbReference>
<dbReference type="FunFam" id="1.10.510.10:FF:000892">
    <property type="entry name" value="Ser/Thr kinase"/>
    <property type="match status" value="1"/>
</dbReference>
<dbReference type="Gene3D" id="1.10.510.10">
    <property type="entry name" value="Transferase(Phosphotransferase) domain 1"/>
    <property type="match status" value="1"/>
</dbReference>
<dbReference type="InterPro" id="IPR050235">
    <property type="entry name" value="CK1_Ser-Thr_kinase"/>
</dbReference>
<dbReference type="InterPro" id="IPR011009">
    <property type="entry name" value="Kinase-like_dom_sf"/>
</dbReference>
<dbReference type="InterPro" id="IPR000719">
    <property type="entry name" value="Prot_kinase_dom"/>
</dbReference>
<dbReference type="PANTHER" id="PTHR11909">
    <property type="entry name" value="CASEIN KINASE-RELATED"/>
    <property type="match status" value="1"/>
</dbReference>
<dbReference type="Pfam" id="PF00069">
    <property type="entry name" value="Pkinase"/>
    <property type="match status" value="1"/>
</dbReference>
<dbReference type="SMART" id="SM00220">
    <property type="entry name" value="S_TKc"/>
    <property type="match status" value="1"/>
</dbReference>
<dbReference type="SUPFAM" id="SSF56112">
    <property type="entry name" value="Protein kinase-like (PK-like)"/>
    <property type="match status" value="1"/>
</dbReference>
<dbReference type="PROSITE" id="PS50011">
    <property type="entry name" value="PROTEIN_KINASE_DOM"/>
    <property type="match status" value="1"/>
</dbReference>
<gene>
    <name type="primary">OPG187</name>
    <name type="synonym">VPK1</name>
    <name type="ORF">B1R</name>
</gene>
<name>PG187_VAR67</name>
<comment type="function">
    <text evidence="1">Essential serine/threonine-protein kinase that plays different role in the viral life cycle. Phosphorylates the host small ribosomal protein RACK1 thereby customizing the ribosomes to a state optimal for viral mRNAs (which contain poly-A leaders) but not for host mRNAs. Facilitates viral DNA replication by inhibiting host BANF1, a cellular host defense responsive to foreign DNA. Phosphorylates host BANF1 on serine and threonine residues; this leads to BANF1 relocalization to the cytoplasm, loss of dimerization and impaired DNA binding activity. Indeed, BANF1 activity depends on its DNA-binding property which is blocked by VPK1-mediated phosphorylation. Required for viral intermediate genes expression, probably by inhibiting host BANF1. Modulates cellular responses via host JUN by two different mechanisms, either by direct phosphorylation or by modulation of upstream JIP1-MAPK complexes. Seems to participate in the accumulation/processing of late proteins and thus in virion maturation. In addition, inhibits B12 repressive activity on viral DNA replication via a phosphorylation-dependent mechanism.</text>
</comment>
<comment type="catalytic activity">
    <reaction evidence="1">
        <text>L-seryl-[protein] + ATP = O-phospho-L-seryl-[protein] + ADP + H(+)</text>
        <dbReference type="Rhea" id="RHEA:17989"/>
        <dbReference type="Rhea" id="RHEA-COMP:9863"/>
        <dbReference type="Rhea" id="RHEA-COMP:11604"/>
        <dbReference type="ChEBI" id="CHEBI:15378"/>
        <dbReference type="ChEBI" id="CHEBI:29999"/>
        <dbReference type="ChEBI" id="CHEBI:30616"/>
        <dbReference type="ChEBI" id="CHEBI:83421"/>
        <dbReference type="ChEBI" id="CHEBI:456216"/>
        <dbReference type="EC" id="2.7.11.1"/>
    </reaction>
</comment>
<comment type="catalytic activity">
    <reaction evidence="1">
        <text>L-threonyl-[protein] + ATP = O-phospho-L-threonyl-[protein] + ADP + H(+)</text>
        <dbReference type="Rhea" id="RHEA:46608"/>
        <dbReference type="Rhea" id="RHEA-COMP:11060"/>
        <dbReference type="Rhea" id="RHEA-COMP:11605"/>
        <dbReference type="ChEBI" id="CHEBI:15378"/>
        <dbReference type="ChEBI" id="CHEBI:30013"/>
        <dbReference type="ChEBI" id="CHEBI:30616"/>
        <dbReference type="ChEBI" id="CHEBI:61977"/>
        <dbReference type="ChEBI" id="CHEBI:456216"/>
        <dbReference type="EC" id="2.7.11.1"/>
    </reaction>
</comment>
<comment type="cofactor">
    <cofactor evidence="1">
        <name>Mg(2+)</name>
        <dbReference type="ChEBI" id="CHEBI:18420"/>
    </cofactor>
</comment>
<comment type="subunit">
    <text evidence="1">Interacts with host JIP1; this interaction increases the amount of MAPK bound to JIP1 and subsequently increases the activity of transcription factors, such as JUN, that respond to these complexes. Interacts with protein OPG198; this interaction inhibits the repressive activity of OPG198 pseudokinase on viral replication factory formation.</text>
</comment>
<comment type="subcellular location">
    <subcellularLocation>
        <location evidence="1">Virion</location>
    </subcellularLocation>
    <subcellularLocation>
        <location evidence="1">Host cytoplasm</location>
    </subcellularLocation>
    <text evidence="1">Localizes in cytoplasmic viral factories and is a minor component of the virion.</text>
</comment>
<comment type="induction">
    <text>Expressed in the early phase of the viral replicative cycle.</text>
</comment>
<comment type="PTM">
    <text evidence="1">Autophosphorylated.</text>
</comment>
<comment type="similarity">
    <text evidence="2">Belongs to the protein kinase superfamily. Ser/Thr protein kinase family. Poxviruses subfamily.</text>
</comment>